<organism>
    <name type="scientific">Geobacter sulfurreducens (strain ATCC 51573 / DSM 12127 / PCA)</name>
    <dbReference type="NCBI Taxonomy" id="243231"/>
    <lineage>
        <taxon>Bacteria</taxon>
        <taxon>Pseudomonadati</taxon>
        <taxon>Thermodesulfobacteriota</taxon>
        <taxon>Desulfuromonadia</taxon>
        <taxon>Geobacterales</taxon>
        <taxon>Geobacteraceae</taxon>
        <taxon>Geobacter</taxon>
    </lineage>
</organism>
<name>SFRA_GEOSL</name>
<comment type="function">
    <text evidence="6 7">NADPH-dependent Fe(3+) reductase. Probably involved in acetate metabolism and not in the reduction of Fe(3+) chelates. Unable to utilize NADH or formate as electron donors. Unlike formate dehydrogenases, contains no W, Mo or Se. Substrates are Fe(3+)-nitrilotriacetate &gt;&gt; Fe(3+)-citrate or Fe(3+)-EDTA &gt; Fe(3+)-oxyhydroxide. Also catalyzes the reduction of NADP(+) with reduced methyl viologen as electron donor. No activity with menadione as electron acceptor. May be alternatively involved in transferring electrons from reduced ferredoxin to NADP(+) and may serve as a major route for NADP regeneration.</text>
</comment>
<comment type="cofactor">
    <cofactor evidence="5">
        <name>[4Fe-4S] cluster</name>
        <dbReference type="ChEBI" id="CHEBI:49883"/>
    </cofactor>
</comment>
<comment type="activity regulation">
    <text evidence="6">Not regulated by FAD or FMN.</text>
</comment>
<comment type="biophysicochemical properties">
    <kinetics>
        <KM evidence="6">25 uM for NADPH</KM>
        <KM evidence="6">1 mM for Fe(3+)-nitrilotriacetate</KM>
    </kinetics>
    <phDependence>
        <text evidence="6">Optimum pH is 5.5.</text>
    </phDependence>
    <temperatureDependence>
        <text evidence="6">Optimum temperature is 45 degrees Celsius.</text>
    </temperatureDependence>
</comment>
<comment type="subunit">
    <text evidence="6">Heterotetramer with 2 beta subunits.</text>
</comment>
<comment type="subcellular location">
    <subcellularLocation>
        <location>Cytoplasm</location>
    </subcellularLocation>
    <subcellularLocation>
        <location evidence="10">Cell inner membrane</location>
        <topology evidence="6 7">Peripheral membrane protein</topology>
    </subcellularLocation>
</comment>
<comment type="induction">
    <text evidence="6">Expressed constitutively.</text>
</comment>
<comment type="miscellaneous">
    <text evidence="9">SfrA lacks the residues that are catalytically important in formate dehydrogenases, including a Cys residue which is a ligand to the heavy-metal atom (Mo or W) of the molybdopterin cofactor.</text>
</comment>
<comment type="caution">
    <text evidence="8">PubMed:17906154 suggests that SfrAB is involved in acetate metabolism and does not participate directly in the reduction of Fe(3+) chelates, as was initially proposed in PubMed:11443080.</text>
</comment>
<feature type="chain" id="PRO_0000429033" description="NADPH-Fe(3+) oxidoreductase subunit alpha">
    <location>
        <begin position="1"/>
        <end position="844"/>
    </location>
</feature>
<feature type="domain" description="2Fe-2S ferredoxin-type" evidence="2">
    <location>
        <begin position="1"/>
        <end position="78"/>
    </location>
</feature>
<feature type="domain" description="4Fe-4S His(Cys)3-ligated-type" evidence="5">
    <location>
        <begin position="78"/>
        <end position="117"/>
    </location>
</feature>
<feature type="domain" description="4Fe-4S ferredoxin-type 1" evidence="3">
    <location>
        <begin position="137"/>
        <end position="168"/>
    </location>
</feature>
<feature type="domain" description="4Fe-4S ferredoxin-type 2" evidence="3">
    <location>
        <begin position="177"/>
        <end position="206"/>
    </location>
</feature>
<feature type="domain" description="4Fe-4S Mo/W bis-MGD-type" evidence="4">
    <location>
        <begin position="215"/>
        <end position="270"/>
    </location>
</feature>
<feature type="binding site" evidence="1">
    <location>
        <position position="34"/>
    </location>
    <ligand>
        <name>[2Fe-2S] cluster</name>
        <dbReference type="ChEBI" id="CHEBI:190135"/>
    </ligand>
</feature>
<feature type="binding site" evidence="1">
    <location>
        <position position="45"/>
    </location>
    <ligand>
        <name>[2Fe-2S] cluster</name>
        <dbReference type="ChEBI" id="CHEBI:190135"/>
    </ligand>
</feature>
<feature type="binding site" evidence="1">
    <location>
        <position position="48"/>
    </location>
    <ligand>
        <name>[2Fe-2S] cluster</name>
        <dbReference type="ChEBI" id="CHEBI:190135"/>
    </ligand>
</feature>
<feature type="binding site" evidence="1">
    <location>
        <position position="62"/>
    </location>
    <ligand>
        <name>[2Fe-2S] cluster</name>
        <dbReference type="ChEBI" id="CHEBI:190135"/>
    </ligand>
</feature>
<feature type="binding site" evidence="5">
    <location>
        <position position="94"/>
    </location>
    <ligand>
        <name>[4Fe-4S] cluster</name>
        <dbReference type="ChEBI" id="CHEBI:49883"/>
        <label>1</label>
    </ligand>
</feature>
<feature type="binding site" evidence="5">
    <location>
        <position position="98"/>
    </location>
    <ligand>
        <name>[4Fe-4S] cluster</name>
        <dbReference type="ChEBI" id="CHEBI:49883"/>
        <label>1</label>
    </ligand>
</feature>
<feature type="binding site" evidence="5">
    <location>
        <position position="101"/>
    </location>
    <ligand>
        <name>[4Fe-4S] cluster</name>
        <dbReference type="ChEBI" id="CHEBI:49883"/>
        <label>1</label>
    </ligand>
</feature>
<feature type="binding site" evidence="5">
    <location>
        <position position="107"/>
    </location>
    <ligand>
        <name>[4Fe-4S] cluster</name>
        <dbReference type="ChEBI" id="CHEBI:49883"/>
        <label>1</label>
    </ligand>
</feature>
<feature type="binding site" evidence="1">
    <location>
        <position position="146"/>
    </location>
    <ligand>
        <name>[4Fe-4S] cluster</name>
        <dbReference type="ChEBI" id="CHEBI:49883"/>
        <label>2</label>
    </ligand>
</feature>
<feature type="binding site" evidence="1">
    <location>
        <position position="149"/>
    </location>
    <ligand>
        <name>[4Fe-4S] cluster</name>
        <dbReference type="ChEBI" id="CHEBI:49883"/>
        <label>2</label>
    </ligand>
</feature>
<feature type="binding site" evidence="1">
    <location>
        <position position="152"/>
    </location>
    <ligand>
        <name>[4Fe-4S] cluster</name>
        <dbReference type="ChEBI" id="CHEBI:49883"/>
        <label>2</label>
    </ligand>
</feature>
<feature type="binding site" evidence="1">
    <location>
        <position position="186"/>
    </location>
    <ligand>
        <name>[4Fe-4S] cluster</name>
        <dbReference type="ChEBI" id="CHEBI:49883"/>
        <label>3</label>
    </ligand>
</feature>
<feature type="binding site" evidence="1">
    <location>
        <position position="189"/>
    </location>
    <ligand>
        <name>[4Fe-4S] cluster</name>
        <dbReference type="ChEBI" id="CHEBI:49883"/>
        <label>3</label>
    </ligand>
</feature>
<feature type="binding site" evidence="1">
    <location>
        <position position="192"/>
    </location>
    <ligand>
        <name>[4Fe-4S] cluster</name>
        <dbReference type="ChEBI" id="CHEBI:49883"/>
        <label>3</label>
    </ligand>
</feature>
<feature type="binding site" evidence="1">
    <location>
        <position position="196"/>
    </location>
    <ligand>
        <name>[4Fe-4S] cluster</name>
        <dbReference type="ChEBI" id="CHEBI:49883"/>
        <label>3</label>
    </ligand>
</feature>
<feature type="binding site" evidence="1">
    <location>
        <position position="222"/>
    </location>
    <ligand>
        <name>[4Fe-4S] cluster</name>
        <dbReference type="ChEBI" id="CHEBI:49883"/>
        <label>4</label>
    </ligand>
</feature>
<feature type="binding site" evidence="1">
    <location>
        <position position="225"/>
    </location>
    <ligand>
        <name>[4Fe-4S] cluster</name>
        <dbReference type="ChEBI" id="CHEBI:49883"/>
        <label>4</label>
    </ligand>
</feature>
<feature type="binding site" evidence="1">
    <location>
        <position position="229"/>
    </location>
    <ligand>
        <name>[4Fe-4S] cluster</name>
        <dbReference type="ChEBI" id="CHEBI:49883"/>
        <label>4</label>
    </ligand>
</feature>
<feature type="binding site" evidence="1">
    <location>
        <position position="256"/>
    </location>
    <ligand>
        <name>[4Fe-4S] cluster</name>
        <dbReference type="ChEBI" id="CHEBI:49883"/>
        <label>4</label>
    </ligand>
</feature>
<dbReference type="EC" id="1.-.-.-"/>
<dbReference type="EMBL" id="AE017180">
    <property type="protein sequence ID" value="AAR33840.1"/>
    <property type="molecule type" value="Genomic_DNA"/>
</dbReference>
<dbReference type="RefSeq" id="NP_951567.1">
    <property type="nucleotide sequence ID" value="NC_002939.5"/>
</dbReference>
<dbReference type="RefSeq" id="WP_010941177.1">
    <property type="nucleotide sequence ID" value="NC_002939.5"/>
</dbReference>
<dbReference type="SMR" id="Q74FU6"/>
<dbReference type="FunCoup" id="Q74FU6">
    <property type="interactions" value="204"/>
</dbReference>
<dbReference type="STRING" id="243231.GSU0509"/>
<dbReference type="EnsemblBacteria" id="AAR33840">
    <property type="protein sequence ID" value="AAR33840"/>
    <property type="gene ID" value="GSU0509"/>
</dbReference>
<dbReference type="KEGG" id="gsu:GSU0509"/>
<dbReference type="PATRIC" id="fig|243231.5.peg.510"/>
<dbReference type="eggNOG" id="COG3383">
    <property type="taxonomic scope" value="Bacteria"/>
</dbReference>
<dbReference type="HOGENOM" id="CLU_000422_4_0_7"/>
<dbReference type="InParanoid" id="Q74FU6"/>
<dbReference type="OrthoDB" id="9816402at2"/>
<dbReference type="Proteomes" id="UP000000577">
    <property type="component" value="Chromosome"/>
</dbReference>
<dbReference type="GO" id="GO:0005737">
    <property type="term" value="C:cytoplasm"/>
    <property type="evidence" value="ECO:0007669"/>
    <property type="project" value="UniProtKB-SubCell"/>
</dbReference>
<dbReference type="GO" id="GO:0016020">
    <property type="term" value="C:membrane"/>
    <property type="evidence" value="ECO:0000318"/>
    <property type="project" value="GO_Central"/>
</dbReference>
<dbReference type="GO" id="GO:0005886">
    <property type="term" value="C:plasma membrane"/>
    <property type="evidence" value="ECO:0007669"/>
    <property type="project" value="UniProtKB-SubCell"/>
</dbReference>
<dbReference type="GO" id="GO:0051537">
    <property type="term" value="F:2 iron, 2 sulfur cluster binding"/>
    <property type="evidence" value="ECO:0007669"/>
    <property type="project" value="UniProtKB-KW"/>
</dbReference>
<dbReference type="GO" id="GO:0051539">
    <property type="term" value="F:4 iron, 4 sulfur cluster binding"/>
    <property type="evidence" value="ECO:0007669"/>
    <property type="project" value="UniProtKB-KW"/>
</dbReference>
<dbReference type="GO" id="GO:0046872">
    <property type="term" value="F:metal ion binding"/>
    <property type="evidence" value="ECO:0007669"/>
    <property type="project" value="UniProtKB-KW"/>
</dbReference>
<dbReference type="GO" id="GO:0043546">
    <property type="term" value="F:molybdopterin cofactor binding"/>
    <property type="evidence" value="ECO:0007669"/>
    <property type="project" value="InterPro"/>
</dbReference>
<dbReference type="GO" id="GO:0008137">
    <property type="term" value="F:NADH dehydrogenase (ubiquinone) activity"/>
    <property type="evidence" value="ECO:0007669"/>
    <property type="project" value="InterPro"/>
</dbReference>
<dbReference type="GO" id="GO:0016651">
    <property type="term" value="F:oxidoreductase activity, acting on NAD(P)H"/>
    <property type="evidence" value="ECO:0000314"/>
    <property type="project" value="TIGR"/>
</dbReference>
<dbReference type="GO" id="GO:0009061">
    <property type="term" value="P:anaerobic respiration"/>
    <property type="evidence" value="ECO:0000304"/>
    <property type="project" value="TIGR"/>
</dbReference>
<dbReference type="GO" id="GO:0042773">
    <property type="term" value="P:ATP synthesis coupled electron transport"/>
    <property type="evidence" value="ECO:0007669"/>
    <property type="project" value="InterPro"/>
</dbReference>
<dbReference type="CDD" id="cd00207">
    <property type="entry name" value="fer2"/>
    <property type="match status" value="1"/>
</dbReference>
<dbReference type="FunFam" id="3.30.70.20:FF:000035">
    <property type="entry name" value="Iron hydrogenase 1"/>
    <property type="match status" value="1"/>
</dbReference>
<dbReference type="FunFam" id="3.10.20.740:FF:000005">
    <property type="entry name" value="NADH:ubiquinone oxidoreductase subunit"/>
    <property type="match status" value="1"/>
</dbReference>
<dbReference type="Gene3D" id="2.40.40.20">
    <property type="match status" value="1"/>
</dbReference>
<dbReference type="Gene3D" id="3.10.20.740">
    <property type="match status" value="1"/>
</dbReference>
<dbReference type="Gene3D" id="3.30.70.20">
    <property type="match status" value="1"/>
</dbReference>
<dbReference type="Gene3D" id="3.40.50.740">
    <property type="match status" value="1"/>
</dbReference>
<dbReference type="Gene3D" id="2.20.25.90">
    <property type="entry name" value="ADC-like domains"/>
    <property type="match status" value="1"/>
</dbReference>
<dbReference type="Gene3D" id="3.40.228.10">
    <property type="entry name" value="Dimethylsulfoxide Reductase, domain 2"/>
    <property type="match status" value="1"/>
</dbReference>
<dbReference type="InterPro" id="IPR036010">
    <property type="entry name" value="2Fe-2S_ferredoxin-like_sf"/>
</dbReference>
<dbReference type="InterPro" id="IPR001041">
    <property type="entry name" value="2Fe-2S_ferredoxin-type"/>
</dbReference>
<dbReference type="InterPro" id="IPR017896">
    <property type="entry name" value="4Fe4S_Fe-S-bd"/>
</dbReference>
<dbReference type="InterPro" id="IPR017900">
    <property type="entry name" value="4Fe4S_Fe_S_CS"/>
</dbReference>
<dbReference type="InterPro" id="IPR009010">
    <property type="entry name" value="Asp_de-COase-like_dom_sf"/>
</dbReference>
<dbReference type="InterPro" id="IPR006657">
    <property type="entry name" value="MoPterin_dinucl-bd_dom"/>
</dbReference>
<dbReference type="InterPro" id="IPR006656">
    <property type="entry name" value="Mopterin_OxRdtase"/>
</dbReference>
<dbReference type="InterPro" id="IPR006963">
    <property type="entry name" value="Mopterin_OxRdtase_4Fe-4S_dom"/>
</dbReference>
<dbReference type="InterPro" id="IPR000283">
    <property type="entry name" value="NADH_UbQ_OxRdtase_75kDa_su_CS"/>
</dbReference>
<dbReference type="InterPro" id="IPR054351">
    <property type="entry name" value="NADH_UbQ_OxRdtase_ferredoxin"/>
</dbReference>
<dbReference type="InterPro" id="IPR019574">
    <property type="entry name" value="NADH_UbQ_OxRdtase_Gsu_4Fe4S-bd"/>
</dbReference>
<dbReference type="InterPro" id="IPR050123">
    <property type="entry name" value="Prok_molybdopt-oxidoreductase"/>
</dbReference>
<dbReference type="PANTHER" id="PTHR43105:SF9">
    <property type="entry name" value="NADPH-FE(3+) OXIDOREDUCTASE SUBUNIT ALPHA"/>
    <property type="match status" value="1"/>
</dbReference>
<dbReference type="PANTHER" id="PTHR43105">
    <property type="entry name" value="RESPIRATORY NITRATE REDUCTASE"/>
    <property type="match status" value="1"/>
</dbReference>
<dbReference type="Pfam" id="PF13510">
    <property type="entry name" value="Fer2_4"/>
    <property type="match status" value="1"/>
</dbReference>
<dbReference type="Pfam" id="PF22117">
    <property type="entry name" value="Fer4_Nqo3"/>
    <property type="match status" value="1"/>
</dbReference>
<dbReference type="Pfam" id="PF04879">
    <property type="entry name" value="Molybdop_Fe4S4"/>
    <property type="match status" value="1"/>
</dbReference>
<dbReference type="Pfam" id="PF00384">
    <property type="entry name" value="Molybdopterin"/>
    <property type="match status" value="1"/>
</dbReference>
<dbReference type="Pfam" id="PF01568">
    <property type="entry name" value="Molydop_binding"/>
    <property type="match status" value="1"/>
</dbReference>
<dbReference type="Pfam" id="PF10588">
    <property type="entry name" value="NADH-G_4Fe-4S_3"/>
    <property type="match status" value="1"/>
</dbReference>
<dbReference type="SMART" id="SM00926">
    <property type="entry name" value="Molybdop_Fe4S4"/>
    <property type="match status" value="1"/>
</dbReference>
<dbReference type="SMART" id="SM00929">
    <property type="entry name" value="NADH-G_4Fe-4S_3"/>
    <property type="match status" value="1"/>
</dbReference>
<dbReference type="SUPFAM" id="SSF54292">
    <property type="entry name" value="2Fe-2S ferredoxin-like"/>
    <property type="match status" value="1"/>
</dbReference>
<dbReference type="SUPFAM" id="SSF54862">
    <property type="entry name" value="4Fe-4S ferredoxins"/>
    <property type="match status" value="1"/>
</dbReference>
<dbReference type="SUPFAM" id="SSF50692">
    <property type="entry name" value="ADC-like"/>
    <property type="match status" value="1"/>
</dbReference>
<dbReference type="SUPFAM" id="SSF53706">
    <property type="entry name" value="Formate dehydrogenase/DMSO reductase, domains 1-3"/>
    <property type="match status" value="1"/>
</dbReference>
<dbReference type="PROSITE" id="PS51085">
    <property type="entry name" value="2FE2S_FER_2"/>
    <property type="match status" value="1"/>
</dbReference>
<dbReference type="PROSITE" id="PS00198">
    <property type="entry name" value="4FE4S_FER_1"/>
    <property type="match status" value="1"/>
</dbReference>
<dbReference type="PROSITE" id="PS51379">
    <property type="entry name" value="4FE4S_FER_2"/>
    <property type="match status" value="2"/>
</dbReference>
<dbReference type="PROSITE" id="PS51839">
    <property type="entry name" value="4FE4S_HC3"/>
    <property type="match status" value="1"/>
</dbReference>
<dbReference type="PROSITE" id="PS51669">
    <property type="entry name" value="4FE4S_MOW_BIS_MGD"/>
    <property type="match status" value="1"/>
</dbReference>
<dbReference type="PROSITE" id="PS00641">
    <property type="entry name" value="COMPLEX1_75K_1"/>
    <property type="match status" value="1"/>
</dbReference>
<dbReference type="PROSITE" id="PS00642">
    <property type="entry name" value="COMPLEX1_75K_2"/>
    <property type="match status" value="1"/>
</dbReference>
<sequence length="844" mass="89387">MVSLTIDGKDITVAKETTILDAAALLGITIPTLCWLKKVSPTGACRVCAVEIEGVDRPMTACNTPVKDGIKVTTQSEKLSRIRQKIMELMLVNHPLDCPVCDAGGECDLQNACYGLGAAKQEYGAVLERRKIRYDWPLIESDPNRCILCEKCVKVDHEIVGCNAIRVVNRGEATIIDTVDGNPLNCEFCGNCVAACPTGTLISKPFKFRGRPWAFTTTPSVCPFCATGCQIEYHSRNGRVERVTSDDSTYNSGNLCINGRFGYSYINSPDRLAEPMVKGQKADWNTAMGTAATALKQIVASHGADAVAGFGSPRVTNEDNYLFQKLMRSAIGTGNIDSEARLGFAATQKVLREMLGIAGASTTIDAIDRATAVLVVGCDLNAEATGMEYRVIKAATKNNAKLVLAAMRDIKLKKFANSHLKYRPGNETLLINALTKAVLEEGLENKEFCSANISNLSDLTAALAGVSIADAAAATGVTEADLRAAARLVGGKKGVAVIFGAELMRGGNTDAVKALINLALILGATAGDTGGLFPVYEKTNIRGLLDMGVAPDHFPGHQTDGTTFEKAWGKKLPAAAGKDLWQIIEGIEQGSVKALYLLGCDPVASFPEGERIRKALEKLELLIVQDPFPGEAAKMAHVVFPSSVAAEKNGTFTTIDGRVQPLAKAVAPSGDAREDWDILTELYNRLTGESRIHSPAAVLDEVAALVPAYASVGRTGGTITAQPRSGGLALAPVSARAVAGSPTTLLVGTILYHSGTTTTWSKNNLEIIPKGYIEIHPNDAAKLGIAEGGKVRLSAGSVKVEGTAKITPRVQPGLLFAPSHFRGMNVNALLSRDGGVVPVTVEKA</sequence>
<accession>Q74FU6</accession>
<gene>
    <name type="primary">sfrA</name>
    <name type="ordered locus">GSU0509</name>
</gene>
<reference key="1">
    <citation type="journal article" date="2003" name="Science">
        <title>Genome of Geobacter sulfurreducens: metal reduction in subsurface environments.</title>
        <authorList>
            <person name="Methe B.A."/>
            <person name="Nelson K.E."/>
            <person name="Eisen J.A."/>
            <person name="Paulsen I.T."/>
            <person name="Nelson W.C."/>
            <person name="Heidelberg J.F."/>
            <person name="Wu D."/>
            <person name="Wu M."/>
            <person name="Ward N.L."/>
            <person name="Beanan M.J."/>
            <person name="Dodson R.J."/>
            <person name="Madupu R."/>
            <person name="Brinkac L.M."/>
            <person name="Daugherty S.C."/>
            <person name="DeBoy R.T."/>
            <person name="Durkin A.S."/>
            <person name="Gwinn M.L."/>
            <person name="Kolonay J.F."/>
            <person name="Sullivan S.A."/>
            <person name="Haft D.H."/>
            <person name="Selengut J."/>
            <person name="Davidsen T.M."/>
            <person name="Zafar N."/>
            <person name="White O."/>
            <person name="Tran B."/>
            <person name="Romero C."/>
            <person name="Forberger H.A."/>
            <person name="Weidman J.F."/>
            <person name="Khouri H.M."/>
            <person name="Feldblyum T.V."/>
            <person name="Utterback T.R."/>
            <person name="Van Aken S.E."/>
            <person name="Lovley D.R."/>
            <person name="Fraser C.M."/>
        </authorList>
    </citation>
    <scope>NUCLEOTIDE SEQUENCE [LARGE SCALE GENOMIC DNA]</scope>
    <source>
        <strain>ATCC 51573 / DSM 12127 / PCA</strain>
    </source>
</reference>
<reference key="2">
    <citation type="journal article" date="2001" name="J. Bacteriol.">
        <title>Isolation and characterization of a soluble NADPH-dependent Fe(III) reductase from Geobacter sulfurreducens.</title>
        <authorList>
            <person name="Kaufmann F."/>
            <person name="Lovley D.R."/>
        </authorList>
    </citation>
    <scope>PROTEIN SEQUENCE OF 1-20</scope>
    <scope>FUNCTION</scope>
    <scope>SUBCELLULAR LOCATION</scope>
    <scope>INDUCTION</scope>
    <scope>SUBUNIT</scope>
    <scope>BIOPHYSICOCHEMICAL PROPERTIES</scope>
    <scope>ACTIVITY REGULATION</scope>
    <source>
        <strain>ATCC 51573 / DSM 12127 / PCA</strain>
    </source>
</reference>
<reference key="3">
    <citation type="journal article" date="2007" name="Microbiology">
        <title>Involvement of Geobacter sulfurreducens SfrAB in acetate metabolism rather than intracellular, respiration-linked Fe(III) citrate reduction.</title>
        <authorList>
            <person name="Coppi M.V."/>
            <person name="O'neil R.A."/>
            <person name="Leang C."/>
            <person name="Kaufmann F."/>
            <person name="Methe B.A."/>
            <person name="Nevin K.P."/>
            <person name="Woodard T.L."/>
            <person name="Liu A."/>
            <person name="Lovley D.R."/>
        </authorList>
    </citation>
    <scope>FUNCTION</scope>
    <scope>SUBCELLULAR LOCATION</scope>
    <source>
        <strain>DL-1 / KN400</strain>
    </source>
</reference>
<proteinExistence type="evidence at protein level"/>
<evidence type="ECO:0000255" key="1"/>
<evidence type="ECO:0000255" key="2">
    <source>
        <dbReference type="PROSITE-ProRule" id="PRU00465"/>
    </source>
</evidence>
<evidence type="ECO:0000255" key="3">
    <source>
        <dbReference type="PROSITE-ProRule" id="PRU00711"/>
    </source>
</evidence>
<evidence type="ECO:0000255" key="4">
    <source>
        <dbReference type="PROSITE-ProRule" id="PRU01004"/>
    </source>
</evidence>
<evidence type="ECO:0000255" key="5">
    <source>
        <dbReference type="PROSITE-ProRule" id="PRU01184"/>
    </source>
</evidence>
<evidence type="ECO:0000269" key="6">
    <source>
    </source>
</evidence>
<evidence type="ECO:0000269" key="7">
    <source>
    </source>
</evidence>
<evidence type="ECO:0000305" key="8"/>
<evidence type="ECO:0000305" key="9">
    <source>
    </source>
</evidence>
<evidence type="ECO:0000305" key="10">
    <source>
    </source>
</evidence>
<keyword id="KW-0001">2Fe-2S</keyword>
<keyword id="KW-0004">4Fe-4S</keyword>
<keyword id="KW-0997">Cell inner membrane</keyword>
<keyword id="KW-1003">Cell membrane</keyword>
<keyword id="KW-0963">Cytoplasm</keyword>
<keyword id="KW-0903">Direct protein sequencing</keyword>
<keyword id="KW-0408">Iron</keyword>
<keyword id="KW-0411">Iron-sulfur</keyword>
<keyword id="KW-0472">Membrane</keyword>
<keyword id="KW-0479">Metal-binding</keyword>
<keyword id="KW-0560">Oxidoreductase</keyword>
<keyword id="KW-1185">Reference proteome</keyword>
<keyword id="KW-0677">Repeat</keyword>
<protein>
    <recommendedName>
        <fullName>NADPH-Fe(3+) oxidoreductase subunit alpha</fullName>
        <ecNumber>1.-.-.-</ecNumber>
    </recommendedName>
    <alternativeName>
        <fullName>Soluble Fe(3+) reductase alpha subunit</fullName>
    </alternativeName>
</protein>